<evidence type="ECO:0000255" key="1">
    <source>
        <dbReference type="HAMAP-Rule" id="MF_01354"/>
    </source>
</evidence>
<keyword id="KW-0472">Membrane</keyword>
<keyword id="KW-0520">NAD</keyword>
<keyword id="KW-0521">NADP</keyword>
<keyword id="KW-0618">Plastoquinone</keyword>
<keyword id="KW-0874">Quinone</keyword>
<keyword id="KW-1185">Reference proteome</keyword>
<keyword id="KW-0793">Thylakoid</keyword>
<keyword id="KW-1278">Translocase</keyword>
<keyword id="KW-0813">Transport</keyword>
<name>NDHO_NOSP7</name>
<reference key="1">
    <citation type="journal article" date="2013" name="Plant Physiol.">
        <title>A Nostoc punctiforme Sugar Transporter Necessary to Establish a Cyanobacterium-Plant Symbiosis.</title>
        <authorList>
            <person name="Ekman M."/>
            <person name="Picossi S."/>
            <person name="Campbell E.L."/>
            <person name="Meeks J.C."/>
            <person name="Flores E."/>
        </authorList>
    </citation>
    <scope>NUCLEOTIDE SEQUENCE [LARGE SCALE GENOMIC DNA]</scope>
    <source>
        <strain>ATCC 29133 / PCC 73102</strain>
    </source>
</reference>
<gene>
    <name evidence="1" type="primary">ndhO</name>
    <name type="ordered locus">Npun_R3935</name>
</gene>
<proteinExistence type="inferred from homology"/>
<sequence length="71" mass="8143">MAVKKGDMVRAIREKLENSLEAKASDTRFPPYLFDSKGEIVDIKGDYALIKFGKVPTPNVWLRVDQLEEFK</sequence>
<accession>B2J5F9</accession>
<feature type="chain" id="PRO_0000353637" description="NAD(P)H-quinone oxidoreductase subunit O">
    <location>
        <begin position="1"/>
        <end position="71"/>
    </location>
</feature>
<dbReference type="EC" id="7.1.1.-" evidence="1"/>
<dbReference type="EMBL" id="CP001037">
    <property type="protein sequence ID" value="ACC82316.1"/>
    <property type="molecule type" value="Genomic_DNA"/>
</dbReference>
<dbReference type="RefSeq" id="WP_012410284.1">
    <property type="nucleotide sequence ID" value="NC_010628.1"/>
</dbReference>
<dbReference type="SMR" id="B2J5F9"/>
<dbReference type="STRING" id="63737.Npun_R3935"/>
<dbReference type="EnsemblBacteria" id="ACC82316">
    <property type="protein sequence ID" value="ACC82316"/>
    <property type="gene ID" value="Npun_R3935"/>
</dbReference>
<dbReference type="KEGG" id="npu:Npun_R3935"/>
<dbReference type="eggNOG" id="ENOG5032XZT">
    <property type="taxonomic scope" value="Bacteria"/>
</dbReference>
<dbReference type="HOGENOM" id="CLU_195299_0_0_3"/>
<dbReference type="OrthoDB" id="426633at2"/>
<dbReference type="PhylomeDB" id="B2J5F9"/>
<dbReference type="Proteomes" id="UP000001191">
    <property type="component" value="Chromosome"/>
</dbReference>
<dbReference type="GO" id="GO:0031676">
    <property type="term" value="C:plasma membrane-derived thylakoid membrane"/>
    <property type="evidence" value="ECO:0007669"/>
    <property type="project" value="UniProtKB-SubCell"/>
</dbReference>
<dbReference type="GO" id="GO:0016655">
    <property type="term" value="F:oxidoreductase activity, acting on NAD(P)H, quinone or similar compound as acceptor"/>
    <property type="evidence" value="ECO:0007669"/>
    <property type="project" value="UniProtKB-UniRule"/>
</dbReference>
<dbReference type="GO" id="GO:0048038">
    <property type="term" value="F:quinone binding"/>
    <property type="evidence" value="ECO:0007669"/>
    <property type="project" value="UniProtKB-KW"/>
</dbReference>
<dbReference type="HAMAP" id="MF_01354">
    <property type="entry name" value="NDH1_NDH1O"/>
    <property type="match status" value="1"/>
</dbReference>
<dbReference type="InterPro" id="IPR020905">
    <property type="entry name" value="NdhO"/>
</dbReference>
<dbReference type="Pfam" id="PF11910">
    <property type="entry name" value="NdhO"/>
    <property type="match status" value="1"/>
</dbReference>
<comment type="function">
    <text evidence="1">NDH-1 shuttles electrons from an unknown electron donor, via FMN and iron-sulfur (Fe-S) centers, to quinones in the respiratory and/or the photosynthetic chain. The immediate electron acceptor for the enzyme in this species is believed to be plastoquinone. Couples the redox reaction to proton translocation, and thus conserves the redox energy in a proton gradient. Cyanobacterial NDH-1 also plays a role in inorganic carbon-concentration.</text>
</comment>
<comment type="catalytic activity">
    <reaction evidence="1">
        <text>a plastoquinone + NADH + (n+1) H(+)(in) = a plastoquinol + NAD(+) + n H(+)(out)</text>
        <dbReference type="Rhea" id="RHEA:42608"/>
        <dbReference type="Rhea" id="RHEA-COMP:9561"/>
        <dbReference type="Rhea" id="RHEA-COMP:9562"/>
        <dbReference type="ChEBI" id="CHEBI:15378"/>
        <dbReference type="ChEBI" id="CHEBI:17757"/>
        <dbReference type="ChEBI" id="CHEBI:57540"/>
        <dbReference type="ChEBI" id="CHEBI:57945"/>
        <dbReference type="ChEBI" id="CHEBI:62192"/>
    </reaction>
</comment>
<comment type="catalytic activity">
    <reaction evidence="1">
        <text>a plastoquinone + NADPH + (n+1) H(+)(in) = a plastoquinol + NADP(+) + n H(+)(out)</text>
        <dbReference type="Rhea" id="RHEA:42612"/>
        <dbReference type="Rhea" id="RHEA-COMP:9561"/>
        <dbReference type="Rhea" id="RHEA-COMP:9562"/>
        <dbReference type="ChEBI" id="CHEBI:15378"/>
        <dbReference type="ChEBI" id="CHEBI:17757"/>
        <dbReference type="ChEBI" id="CHEBI:57783"/>
        <dbReference type="ChEBI" id="CHEBI:58349"/>
        <dbReference type="ChEBI" id="CHEBI:62192"/>
    </reaction>
</comment>
<comment type="subunit">
    <text evidence="1">NDH-1 can be composed of about 15 different subunits; different subcomplexes with different compositions have been identified which probably have different functions.</text>
</comment>
<comment type="subcellular location">
    <subcellularLocation>
        <location evidence="1">Cellular thylakoid membrane</location>
        <topology evidence="1">Peripheral membrane protein</topology>
        <orientation evidence="1">Cytoplasmic side</orientation>
    </subcellularLocation>
</comment>
<comment type="similarity">
    <text evidence="1">Belongs to the complex I NdhO subunit family.</text>
</comment>
<organism>
    <name type="scientific">Nostoc punctiforme (strain ATCC 29133 / PCC 73102)</name>
    <dbReference type="NCBI Taxonomy" id="63737"/>
    <lineage>
        <taxon>Bacteria</taxon>
        <taxon>Bacillati</taxon>
        <taxon>Cyanobacteriota</taxon>
        <taxon>Cyanophyceae</taxon>
        <taxon>Nostocales</taxon>
        <taxon>Nostocaceae</taxon>
        <taxon>Nostoc</taxon>
    </lineage>
</organism>
<protein>
    <recommendedName>
        <fullName evidence="1">NAD(P)H-quinone oxidoreductase subunit O</fullName>
        <ecNumber evidence="1">7.1.1.-</ecNumber>
    </recommendedName>
    <alternativeName>
        <fullName evidence="1">NAD(P)H dehydrogenase I subunit O</fullName>
    </alternativeName>
    <alternativeName>
        <fullName>NDH-1 subunit O</fullName>
    </alternativeName>
    <alternativeName>
        <fullName>NDH-O</fullName>
    </alternativeName>
</protein>